<proteinExistence type="evidence at protein level"/>
<dbReference type="EC" id="3.2.1.23"/>
<dbReference type="EMBL" id="U70664">
    <property type="protein sequence ID" value="AAB40123.2"/>
    <property type="molecule type" value="Genomic_DNA"/>
</dbReference>
<dbReference type="PIR" id="T44793">
    <property type="entry name" value="T44793"/>
</dbReference>
<dbReference type="RefSeq" id="WP_083867099.1">
    <property type="nucleotide sequence ID" value="NZ_AOLH01000020.1"/>
</dbReference>
<dbReference type="SMR" id="P94804"/>
<dbReference type="CAZy" id="GH42">
    <property type="family name" value="Glycoside Hydrolase Family 42"/>
</dbReference>
<dbReference type="BRENDA" id="3.2.1.23">
    <property type="organism ID" value="13661"/>
</dbReference>
<dbReference type="BRENDA" id="3.2.1.38">
    <property type="organism ID" value="13661"/>
</dbReference>
<dbReference type="GO" id="GO:0009341">
    <property type="term" value="C:beta-galactosidase complex"/>
    <property type="evidence" value="ECO:0007669"/>
    <property type="project" value="InterPro"/>
</dbReference>
<dbReference type="GO" id="GO:0004565">
    <property type="term" value="F:beta-galactosidase activity"/>
    <property type="evidence" value="ECO:0007669"/>
    <property type="project" value="UniProtKB-EC"/>
</dbReference>
<dbReference type="GO" id="GO:0046872">
    <property type="term" value="F:metal ion binding"/>
    <property type="evidence" value="ECO:0007669"/>
    <property type="project" value="UniProtKB-KW"/>
</dbReference>
<dbReference type="GO" id="GO:0006012">
    <property type="term" value="P:galactose metabolic process"/>
    <property type="evidence" value="ECO:0007669"/>
    <property type="project" value="InterPro"/>
</dbReference>
<dbReference type="CDD" id="cd03143">
    <property type="entry name" value="A4_beta-galactosidase_middle_domain"/>
    <property type="match status" value="1"/>
</dbReference>
<dbReference type="Gene3D" id="3.40.50.880">
    <property type="match status" value="1"/>
</dbReference>
<dbReference type="Gene3D" id="3.20.20.80">
    <property type="entry name" value="Glycosidases"/>
    <property type="match status" value="1"/>
</dbReference>
<dbReference type="Gene3D" id="2.60.40.1180">
    <property type="entry name" value="Golgi alpha-mannosidase II"/>
    <property type="match status" value="1"/>
</dbReference>
<dbReference type="InterPro" id="IPR013739">
    <property type="entry name" value="Beta_galactosidase_C"/>
</dbReference>
<dbReference type="InterPro" id="IPR013738">
    <property type="entry name" value="Beta_galactosidase_Trimer"/>
</dbReference>
<dbReference type="InterPro" id="IPR029062">
    <property type="entry name" value="Class_I_gatase-like"/>
</dbReference>
<dbReference type="InterPro" id="IPR003476">
    <property type="entry name" value="Glyco_hydro_42"/>
</dbReference>
<dbReference type="InterPro" id="IPR013529">
    <property type="entry name" value="Glyco_hydro_42_N"/>
</dbReference>
<dbReference type="InterPro" id="IPR013780">
    <property type="entry name" value="Glyco_hydro_b"/>
</dbReference>
<dbReference type="InterPro" id="IPR017853">
    <property type="entry name" value="Glycoside_hydrolase_SF"/>
</dbReference>
<dbReference type="PANTHER" id="PTHR36447">
    <property type="entry name" value="BETA-GALACTOSIDASE GANA"/>
    <property type="match status" value="1"/>
</dbReference>
<dbReference type="PANTHER" id="PTHR36447:SF2">
    <property type="entry name" value="BETA-GALACTOSIDASE YESZ"/>
    <property type="match status" value="1"/>
</dbReference>
<dbReference type="Pfam" id="PF02449">
    <property type="entry name" value="Glyco_hydro_42"/>
    <property type="match status" value="1"/>
</dbReference>
<dbReference type="Pfam" id="PF08533">
    <property type="entry name" value="Glyco_hydro_42C"/>
    <property type="match status" value="1"/>
</dbReference>
<dbReference type="Pfam" id="PF08532">
    <property type="entry name" value="Glyco_hydro_42M"/>
    <property type="match status" value="1"/>
</dbReference>
<dbReference type="PIRSF" id="PIRSF001084">
    <property type="entry name" value="B-galactosidase"/>
    <property type="match status" value="1"/>
</dbReference>
<dbReference type="SUPFAM" id="SSF51445">
    <property type="entry name" value="(Trans)glycosidases"/>
    <property type="match status" value="1"/>
</dbReference>
<dbReference type="SUPFAM" id="SSF52317">
    <property type="entry name" value="Class I glutamine amidotransferase-like"/>
    <property type="match status" value="1"/>
</dbReference>
<dbReference type="SUPFAM" id="SSF51011">
    <property type="entry name" value="Glycosyl hydrolase domain"/>
    <property type="match status" value="1"/>
</dbReference>
<name>BGAL_HALL2</name>
<evidence type="ECO:0000250" key="1">
    <source>
        <dbReference type="UniProtKB" id="O69315"/>
    </source>
</evidence>
<evidence type="ECO:0000255" key="2"/>
<evidence type="ECO:0000269" key="3">
    <source>
    </source>
</evidence>
<evidence type="ECO:0000269" key="4">
    <source>
    </source>
</evidence>
<evidence type="ECO:0000305" key="5"/>
<evidence type="ECO:0000312" key="6">
    <source>
        <dbReference type="EMBL" id="AAB40123.2"/>
    </source>
</evidence>
<sequence>MTVGVCYFPEHWSRERWETDISQMAEAGIEYVRMGEFAWRRIEPERGTFDFAWLDEAVELIGKFGMKAVLCTPTATPPKWLVDEHPDVRQREQDGTPREWGSRRFTCFNSPTYRSETERIVSVLTDRYADNPHVAGWQTDNEFGCHETVTCYCEDCGEAFSEWLADRYESVADLNDAWGTTFWSQQYDDFESIDPPKPTPAANHPSRVLAYERFSNDSVAEYNRLHAALIREANDEWFVTHNFMGGFSLDAFRLAADLDFLSWDSYPTGFVQDRQPDTPTVDELRAGNPDQVSMNHDLQRGAKGKPFWVMEQQPGDINWPPQSPQPADGAMRLWAHHAVAHGADAVVYFRWRRCRQGQEQYHAGLRRQDGSPDRGYREASTAADELFDLDSVDASVALVHDYESLWATRSQPLSPDWDYWNHLRTYYDALRARGVQVDIVSPEATLERYDAVVAPTLYLVGDELSTALTDYVDSGGCLLLGARTGEKDPYNRLHESLAPGPLTALTGAQVARHETLPDHVETRLSYDGATYEFRTWASWLAPEVGVPRGEYRTGEAAGNTAIVRNAAGDGSVTYCGCWPGDDLADALVTELLDAAGVEYTERFPDGVRVMERDGYTWALNFTSDPVTLTVPDSTGFLLGESTVDAFDTAVLDGSIRGVGLASE</sequence>
<organism>
    <name type="scientific">Haloferax lucentense (strain DSM 14919 / JCM 9276 / NCIMB 13854 / Aa 2.2)</name>
    <name type="common">Haloferax alicantei</name>
    <dbReference type="NCBI Taxonomy" id="1230452"/>
    <lineage>
        <taxon>Archaea</taxon>
        <taxon>Methanobacteriati</taxon>
        <taxon>Methanobacteriota</taxon>
        <taxon>Stenosarchaea group</taxon>
        <taxon>Halobacteria</taxon>
        <taxon>Halobacteriales</taxon>
        <taxon>Haloferacaceae</taxon>
        <taxon>Haloferax</taxon>
    </lineage>
</organism>
<comment type="function">
    <text evidence="3 4">When overexpressed, cleaves several different substrates including o-nitrophenyl-beta-D-galactopyranoside (ONPG), chromogen 5-bromo-4-chloro-3-indolyl-beta-D-galactopyranoside (X-Gal) and lactulose, but not lactose. Also has beta-D-fucosidase activity. No beta-L-fucosidase, beta-glucosidase, beta-arabinosidase or beta-xylosidase activity.</text>
</comment>
<comment type="catalytic activity">
    <reaction evidence="3 4">
        <text>Hydrolysis of terminal non-reducing beta-D-galactose residues in beta-D-galactosides.</text>
        <dbReference type="EC" id="3.2.1.23"/>
    </reaction>
</comment>
<comment type="activity regulation">
    <text evidence="4">Requires 4 M NaCl for maximal activity. Loss of activity if DTT or beta-mercaptoethanol is omitted from buffers. Addition of 5-20 mM EDTA, 1 mM Cu(2+) or 1 mM Zn(2+) results in loss of activity.</text>
</comment>
<comment type="biophysicochemical properties">
    <kinetics>
        <KM evidence="4">0.87 mM for ONPG (in the presence of 2.5 M NaCl, at room temperature and pH 7.2)</KM>
        <Vmax evidence="4">110.0 umol/min/mg enzyme with ONPG as substrate (in the presence of 2.5 M NaCl, at room temperature and pH 7.2)</Vmax>
    </kinetics>
    <temperatureDependence>
        <text evidence="4">Stable in 3 M NaCl for several days at room temperature, but approximately 18% and 50% of specific activity is lost when samples are stored overnight at 4 and -20 degrees Celsius, respectively. Activity is irreversibly lost within minutes in low salt buffers. Activity low, but detectable in 30% sorbitol in the complete absence of salt and it is stable in 30% sorbitol for at least four months at -20 degrees Celsius, but at room temperature approximately 20% of specific activity is lost after 48 hours.</text>
    </temperatureDependence>
</comment>
<comment type="subunit">
    <text evidence="4">Homodimer.</text>
</comment>
<comment type="induction">
    <text evidence="3">Highest expression in cells grown on galactose. Glucose or glycerol, alone or in combination with galactose, gives an intermediate level of expression and peptone-containing media gives very low levels of expression.</text>
</comment>
<comment type="similarity">
    <text evidence="2">Belongs to the glycosyl hydrolase 42 family.</text>
</comment>
<gene>
    <name evidence="6" type="primary">bgaH</name>
</gene>
<protein>
    <recommendedName>
        <fullName>Beta-galactosidase BgaH</fullName>
        <shortName evidence="1">Beta-gal</shortName>
        <ecNumber>3.2.1.23</ecNumber>
    </recommendedName>
</protein>
<accession>P94804</accession>
<reference evidence="5 6" key="1">
    <citation type="journal article" date="2000" name="Mol. Microbiol.">
        <title>Sequence and expression of a halobacterial beta-galactosidase gene.</title>
        <authorList>
            <person name="Holmes M.L."/>
            <person name="Dyall-Smith M.L."/>
        </authorList>
    </citation>
    <scope>NUCLEOTIDE SEQUENCE [GENOMIC DNA]</scope>
    <scope>CATALYTIC ACTIVITY</scope>
    <scope>INDUCTION</scope>
    <source>
        <strain>Aa 2.2 / SB1</strain>
    </source>
</reference>
<reference evidence="5 6" key="2">
    <citation type="submission" date="2001-08" db="EMBL/GenBank/DDBJ databases">
        <authorList>
            <person name="Holmes M.L."/>
            <person name="Dyall-Smith M.L."/>
        </authorList>
    </citation>
    <scope>SEQUENCE REVISION TO C-TERMINUS</scope>
</reference>
<reference evidence="5 6" key="3">
    <citation type="journal article" date="1997" name="Biochim. Biophys. Acta">
        <title>Purification and analysis of an extremely halophilic beta-galactosidase from Haloferax alicantei.</title>
        <authorList>
            <person name="Holmes M.L."/>
            <person name="Scopes R.K."/>
            <person name="Moritz R.L."/>
            <person name="Simpson R.J."/>
            <person name="Englert C."/>
            <person name="Pfeifer F."/>
            <person name="Dyall-Smith M.L."/>
        </authorList>
    </citation>
    <scope>PROTEIN SEQUENCE OF 2-26; 286-300; 410-424; 425-431 AND 493-512</scope>
    <scope>FUNCTION</scope>
    <scope>CATALYTIC ACTIVITY</scope>
    <scope>ACTIVITY REGULATION</scope>
    <scope>BIOPHYSICOCHEMICAL PROPERTIES</scope>
    <scope>SUBSTRATE SPECIFICITY</scope>
    <scope>SUBUNIT</scope>
    <source>
        <strain>Aa 2.2 / SB1</strain>
    </source>
</reference>
<keyword id="KW-0903">Direct protein sequencing</keyword>
<keyword id="KW-0326">Glycosidase</keyword>
<keyword id="KW-0378">Hydrolase</keyword>
<keyword id="KW-0479">Metal-binding</keyword>
<keyword id="KW-0862">Zinc</keyword>
<feature type="initiator methionine" description="Removed" evidence="4">
    <location>
        <position position="1"/>
    </location>
</feature>
<feature type="chain" id="PRO_0000407697" description="Beta-galactosidase BgaH">
    <location>
        <begin position="2"/>
        <end position="663"/>
    </location>
</feature>
<feature type="active site" description="Proton donor" evidence="1">
    <location>
        <position position="142"/>
    </location>
</feature>
<feature type="active site" description="Nucleophile" evidence="1">
    <location>
        <position position="311"/>
    </location>
</feature>
<feature type="binding site" evidence="1">
    <location>
        <position position="103"/>
    </location>
    <ligand>
        <name>substrate</name>
    </ligand>
</feature>
<feature type="binding site" evidence="1">
    <location>
        <position position="107"/>
    </location>
    <ligand>
        <name>Zn(2+)</name>
        <dbReference type="ChEBI" id="CHEBI:29105"/>
    </ligand>
</feature>
<feature type="binding site" evidence="1">
    <location>
        <position position="141"/>
    </location>
    <ligand>
        <name>substrate</name>
    </ligand>
</feature>
<feature type="binding site" evidence="1">
    <location>
        <position position="151"/>
    </location>
    <ligand>
        <name>Zn(2+)</name>
        <dbReference type="ChEBI" id="CHEBI:29105"/>
    </ligand>
</feature>
<feature type="binding site" evidence="1">
    <location>
        <position position="153"/>
    </location>
    <ligand>
        <name>Zn(2+)</name>
        <dbReference type="ChEBI" id="CHEBI:29105"/>
    </ligand>
</feature>
<feature type="binding site" evidence="1">
    <location>
        <position position="156"/>
    </location>
    <ligand>
        <name>Zn(2+)</name>
        <dbReference type="ChEBI" id="CHEBI:29105"/>
    </ligand>
</feature>
<feature type="binding site" evidence="1">
    <location>
        <position position="319"/>
    </location>
    <ligand>
        <name>substrate</name>
    </ligand>
</feature>
<feature type="binding site" evidence="1">
    <location>
        <begin position="359"/>
        <end position="362"/>
    </location>
    <ligand>
        <name>substrate</name>
    </ligand>
</feature>
<feature type="sequence conflict" description="In Ref. 3; AA sequence." evidence="5" ref="3">
    <original>I</original>
    <variation>F</variation>
    <location>
        <position position="21"/>
    </location>
</feature>